<dbReference type="EC" id="1.14.14.1"/>
<dbReference type="EMBL" id="AF372494">
    <property type="protein sequence ID" value="AAL72278.2"/>
    <property type="molecule type" value="Genomic_DNA"/>
</dbReference>
<dbReference type="EMBL" id="AF372488">
    <property type="protein sequence ID" value="AAL72278.2"/>
    <property type="status" value="JOINED"/>
    <property type="molecule type" value="Genomic_DNA"/>
</dbReference>
<dbReference type="EMBL" id="AF372489">
    <property type="protein sequence ID" value="AAL72278.2"/>
    <property type="status" value="JOINED"/>
    <property type="molecule type" value="Genomic_DNA"/>
</dbReference>
<dbReference type="EMBL" id="AF372490">
    <property type="protein sequence ID" value="AAL72278.2"/>
    <property type="status" value="JOINED"/>
    <property type="molecule type" value="Genomic_DNA"/>
</dbReference>
<dbReference type="EMBL" id="AF372492">
    <property type="protein sequence ID" value="AAL72278.2"/>
    <property type="status" value="JOINED"/>
    <property type="molecule type" value="Genomic_DNA"/>
</dbReference>
<dbReference type="SMR" id="Q8WNE1"/>
<dbReference type="FunCoup" id="Q8WNE1">
    <property type="interactions" value="192"/>
</dbReference>
<dbReference type="STRING" id="9593.ENSGGOP00000009491"/>
<dbReference type="InParanoid" id="Q8WNE1"/>
<dbReference type="Proteomes" id="UP000001519">
    <property type="component" value="Unplaced"/>
</dbReference>
<dbReference type="GO" id="GO:0005737">
    <property type="term" value="C:cytoplasm"/>
    <property type="evidence" value="ECO:0000318"/>
    <property type="project" value="GO_Central"/>
</dbReference>
<dbReference type="GO" id="GO:0005789">
    <property type="term" value="C:endoplasmic reticulum membrane"/>
    <property type="evidence" value="ECO:0007669"/>
    <property type="project" value="UniProtKB-SubCell"/>
</dbReference>
<dbReference type="GO" id="GO:0043231">
    <property type="term" value="C:intracellular membrane-bounded organelle"/>
    <property type="evidence" value="ECO:0000318"/>
    <property type="project" value="GO_Central"/>
</dbReference>
<dbReference type="GO" id="GO:0008392">
    <property type="term" value="F:arachidonate epoxygenase activity"/>
    <property type="evidence" value="ECO:0000318"/>
    <property type="project" value="GO_Central"/>
</dbReference>
<dbReference type="GO" id="GO:0020037">
    <property type="term" value="F:heme binding"/>
    <property type="evidence" value="ECO:0000318"/>
    <property type="project" value="GO_Central"/>
</dbReference>
<dbReference type="GO" id="GO:0005506">
    <property type="term" value="F:iron ion binding"/>
    <property type="evidence" value="ECO:0007669"/>
    <property type="project" value="InterPro"/>
</dbReference>
<dbReference type="GO" id="GO:0016712">
    <property type="term" value="F:oxidoreductase activity, acting on paired donors, with incorporation or reduction of molecular oxygen, reduced flavin or flavoprotein as one donor, and incorporation of one atom of oxygen"/>
    <property type="evidence" value="ECO:0000318"/>
    <property type="project" value="GO_Central"/>
</dbReference>
<dbReference type="GO" id="GO:0019825">
    <property type="term" value="F:oxygen binding"/>
    <property type="evidence" value="ECO:0007669"/>
    <property type="project" value="InterPro"/>
</dbReference>
<dbReference type="GO" id="GO:0019373">
    <property type="term" value="P:epoxygenase P450 pathway"/>
    <property type="evidence" value="ECO:0000318"/>
    <property type="project" value="GO_Central"/>
</dbReference>
<dbReference type="GO" id="GO:0006805">
    <property type="term" value="P:xenobiotic metabolic process"/>
    <property type="evidence" value="ECO:0000318"/>
    <property type="project" value="GO_Central"/>
</dbReference>
<dbReference type="CDD" id="cd20669">
    <property type="entry name" value="Cyp2F"/>
    <property type="match status" value="1"/>
</dbReference>
<dbReference type="FunFam" id="1.10.630.10:FF:000001">
    <property type="entry name" value="Cytochrome P450, family 2"/>
    <property type="match status" value="1"/>
</dbReference>
<dbReference type="Gene3D" id="1.10.630.10">
    <property type="entry name" value="Cytochrome P450"/>
    <property type="match status" value="1"/>
</dbReference>
<dbReference type="InterPro" id="IPR001128">
    <property type="entry name" value="Cyt_P450"/>
</dbReference>
<dbReference type="InterPro" id="IPR017972">
    <property type="entry name" value="Cyt_P450_CS"/>
</dbReference>
<dbReference type="InterPro" id="IPR020469">
    <property type="entry name" value="Cyt_P450_CYP2_fam"/>
</dbReference>
<dbReference type="InterPro" id="IPR002401">
    <property type="entry name" value="Cyt_P450_E_grp-I"/>
</dbReference>
<dbReference type="InterPro" id="IPR036396">
    <property type="entry name" value="Cyt_P450_sf"/>
</dbReference>
<dbReference type="InterPro" id="IPR050182">
    <property type="entry name" value="Cytochrome_P450_fam2"/>
</dbReference>
<dbReference type="PANTHER" id="PTHR24300:SF275">
    <property type="entry name" value="CYTOCHROME P450 2F1"/>
    <property type="match status" value="1"/>
</dbReference>
<dbReference type="PANTHER" id="PTHR24300">
    <property type="entry name" value="CYTOCHROME P450 508A4-RELATED"/>
    <property type="match status" value="1"/>
</dbReference>
<dbReference type="Pfam" id="PF00067">
    <property type="entry name" value="p450"/>
    <property type="match status" value="1"/>
</dbReference>
<dbReference type="PRINTS" id="PR00463">
    <property type="entry name" value="EP450I"/>
</dbReference>
<dbReference type="PRINTS" id="PR01957">
    <property type="entry name" value="EP450ICYP2F"/>
</dbReference>
<dbReference type="PRINTS" id="PR00385">
    <property type="entry name" value="P450"/>
</dbReference>
<dbReference type="SUPFAM" id="SSF48264">
    <property type="entry name" value="Cytochrome P450"/>
    <property type="match status" value="1"/>
</dbReference>
<dbReference type="PROSITE" id="PS00086">
    <property type="entry name" value="CYTOCHROME_P450"/>
    <property type="match status" value="1"/>
</dbReference>
<accession>Q8WNE1</accession>
<sequence>MDSVSTAILLLLLALICLLLTLSSRDKGKLPPGPRPLPLLGNLLLLRSQDMLTSLTKLSKEYGSMYTVHLGPRRVVVLSGYQAVKEALVDQGEEFSGRRDFPAFFNFTKGNGIAFSNGDRWKVLRRFSIQILRNFGMGKRSIEERILEEGSFLLAELRKTEGEPFDPTFVLSRSVSNIICSVLFGSRFDYDDERLLTIIRHINDNFQIMSSPWGELYDIFPSLLDWVPGPHQRIFQNFKCLRDLIAHSVHDHQASLDPRSPRDFIDCFLTKMAEENEDPLSHFHMDTLLMTTHNLLFGGTETVGTTLRYAFLALMKYPKVQARVQEEIDLVVGRARLPALKDRAAMPYTDAVIHEVQRFADIIPMSLPHRVTRDTAFRGFLIPKGTDIITLLNTVHYDPSQFLTPQEFNPEHFLDANQSFKKSPAFMPFSAGRRLCLGESLARMELFLYLTAILQSFSLQPLGAPKDIDLTPLSSGLGNLPRPFQLCLRPR</sequence>
<gene>
    <name type="primary">CYP2F5</name>
</gene>
<keyword id="KW-0256">Endoplasmic reticulum</keyword>
<keyword id="KW-0349">Heme</keyword>
<keyword id="KW-0408">Iron</keyword>
<keyword id="KW-0472">Membrane</keyword>
<keyword id="KW-0479">Metal-binding</keyword>
<keyword id="KW-0492">Microsome</keyword>
<keyword id="KW-0503">Monooxygenase</keyword>
<keyword id="KW-0560">Oxidoreductase</keyword>
<keyword id="KW-1185">Reference proteome</keyword>
<comment type="function">
    <text>Cytochromes P450 are a group of heme-thiolate monooxygenases. In liver microsomes, this enzyme is involved in an NADPH-dependent electron transport pathway. It oxidizes a variety of structurally unrelated compounds, including steroids, fatty acids, and xenobiotics.</text>
</comment>
<comment type="catalytic activity">
    <reaction>
        <text>an organic molecule + reduced [NADPH--hemoprotein reductase] + O2 = an alcohol + oxidized [NADPH--hemoprotein reductase] + H2O + H(+)</text>
        <dbReference type="Rhea" id="RHEA:17149"/>
        <dbReference type="Rhea" id="RHEA-COMP:11964"/>
        <dbReference type="Rhea" id="RHEA-COMP:11965"/>
        <dbReference type="ChEBI" id="CHEBI:15377"/>
        <dbReference type="ChEBI" id="CHEBI:15378"/>
        <dbReference type="ChEBI" id="CHEBI:15379"/>
        <dbReference type="ChEBI" id="CHEBI:30879"/>
        <dbReference type="ChEBI" id="CHEBI:57618"/>
        <dbReference type="ChEBI" id="CHEBI:58210"/>
        <dbReference type="ChEBI" id="CHEBI:142491"/>
        <dbReference type="EC" id="1.14.14.1"/>
    </reaction>
</comment>
<comment type="cofactor">
    <cofactor evidence="1">
        <name>heme</name>
        <dbReference type="ChEBI" id="CHEBI:30413"/>
    </cofactor>
</comment>
<comment type="subcellular location">
    <subcellularLocation>
        <location>Endoplasmic reticulum membrane</location>
        <topology>Peripheral membrane protein</topology>
    </subcellularLocation>
    <subcellularLocation>
        <location>Microsome membrane</location>
        <topology>Peripheral membrane protein</topology>
    </subcellularLocation>
</comment>
<comment type="similarity">
    <text evidence="2">Belongs to the cytochrome P450 family.</text>
</comment>
<reference key="1">
    <citation type="journal article" date="2002" name="Mutat. Res.">
        <title>Identification and cross-species comparisons of CYP2F subfamily genes in mammals.</title>
        <authorList>
            <person name="Chen N."/>
            <person name="Whitehead S.E."/>
            <person name="Caillat A.W."/>
            <person name="Gavit K."/>
            <person name="Isphording D.R."/>
            <person name="Kovacevic D."/>
            <person name="McCreary M.B."/>
            <person name="Hoffman S.M.G."/>
        </authorList>
    </citation>
    <scope>NUCLEOTIDE SEQUENCE [GENOMIC DNA]</scope>
</reference>
<evidence type="ECO:0000250" key="1"/>
<evidence type="ECO:0000305" key="2"/>
<name>CP2F5_GORGO</name>
<feature type="chain" id="PRO_0000051763" description="Cytochrome P450 2F5">
    <location>
        <begin position="1"/>
        <end position="491"/>
    </location>
</feature>
<feature type="binding site" description="axial binding residue" evidence="1">
    <location>
        <position position="436"/>
    </location>
    <ligand>
        <name>heme</name>
        <dbReference type="ChEBI" id="CHEBI:30413"/>
    </ligand>
    <ligandPart>
        <name>Fe</name>
        <dbReference type="ChEBI" id="CHEBI:18248"/>
    </ligandPart>
</feature>
<organism>
    <name type="scientific">Gorilla gorilla gorilla</name>
    <name type="common">Western lowland gorilla</name>
    <dbReference type="NCBI Taxonomy" id="9595"/>
    <lineage>
        <taxon>Eukaryota</taxon>
        <taxon>Metazoa</taxon>
        <taxon>Chordata</taxon>
        <taxon>Craniata</taxon>
        <taxon>Vertebrata</taxon>
        <taxon>Euteleostomi</taxon>
        <taxon>Mammalia</taxon>
        <taxon>Eutheria</taxon>
        <taxon>Euarchontoglires</taxon>
        <taxon>Primates</taxon>
        <taxon>Haplorrhini</taxon>
        <taxon>Catarrhini</taxon>
        <taxon>Hominidae</taxon>
        <taxon>Gorilla</taxon>
    </lineage>
</organism>
<proteinExistence type="inferred from homology"/>
<protein>
    <recommendedName>
        <fullName>Cytochrome P450 2F5</fullName>
        <shortName>CYP4502F5</shortName>
        <ecNumber>1.14.14.1</ecNumber>
    </recommendedName>
    <alternativeName>
        <fullName>CYPIIF5</fullName>
    </alternativeName>
</protein>